<name>SYC_PYRCJ</name>
<evidence type="ECO:0000255" key="1">
    <source>
        <dbReference type="HAMAP-Rule" id="MF_00041"/>
    </source>
</evidence>
<keyword id="KW-0030">Aminoacyl-tRNA synthetase</keyword>
<keyword id="KW-0067">ATP-binding</keyword>
<keyword id="KW-0963">Cytoplasm</keyword>
<keyword id="KW-0436">Ligase</keyword>
<keyword id="KW-0479">Metal-binding</keyword>
<keyword id="KW-0547">Nucleotide-binding</keyword>
<keyword id="KW-0648">Protein biosynthesis</keyword>
<keyword id="KW-0862">Zinc</keyword>
<proteinExistence type="inferred from homology"/>
<feature type="chain" id="PRO_1000074624" description="Cysteine--tRNA ligase">
    <location>
        <begin position="1"/>
        <end position="473"/>
    </location>
</feature>
<feature type="short sequence motif" description="'HIGH' region">
    <location>
        <begin position="29"/>
        <end position="39"/>
    </location>
</feature>
<feature type="short sequence motif" description="'KMSKS' region">
    <location>
        <begin position="271"/>
        <end position="275"/>
    </location>
</feature>
<feature type="binding site" evidence="1">
    <location>
        <position position="27"/>
    </location>
    <ligand>
        <name>Zn(2+)</name>
        <dbReference type="ChEBI" id="CHEBI:29105"/>
    </ligand>
</feature>
<feature type="binding site" evidence="1">
    <location>
        <position position="213"/>
    </location>
    <ligand>
        <name>Zn(2+)</name>
        <dbReference type="ChEBI" id="CHEBI:29105"/>
    </ligand>
</feature>
<feature type="binding site" evidence="1">
    <location>
        <position position="238"/>
    </location>
    <ligand>
        <name>Zn(2+)</name>
        <dbReference type="ChEBI" id="CHEBI:29105"/>
    </ligand>
</feature>
<feature type="binding site" evidence="1">
    <location>
        <position position="242"/>
    </location>
    <ligand>
        <name>Zn(2+)</name>
        <dbReference type="ChEBI" id="CHEBI:29105"/>
    </ligand>
</feature>
<feature type="binding site" evidence="1">
    <location>
        <position position="274"/>
    </location>
    <ligand>
        <name>ATP</name>
        <dbReference type="ChEBI" id="CHEBI:30616"/>
    </ligand>
</feature>
<dbReference type="EC" id="6.1.1.16" evidence="1"/>
<dbReference type="EMBL" id="CP000561">
    <property type="protein sequence ID" value="ABO07471.1"/>
    <property type="molecule type" value="Genomic_DNA"/>
</dbReference>
<dbReference type="RefSeq" id="WP_011848728.1">
    <property type="nucleotide sequence ID" value="NC_009073.1"/>
</dbReference>
<dbReference type="SMR" id="A3MS54"/>
<dbReference type="STRING" id="410359.Pcal_0031"/>
<dbReference type="GeneID" id="4909679"/>
<dbReference type="KEGG" id="pcl:Pcal_0031"/>
<dbReference type="eggNOG" id="arCOG00486">
    <property type="taxonomic scope" value="Archaea"/>
</dbReference>
<dbReference type="HOGENOM" id="CLU_013528_0_1_2"/>
<dbReference type="OrthoDB" id="9445at2157"/>
<dbReference type="Proteomes" id="UP000001431">
    <property type="component" value="Chromosome"/>
</dbReference>
<dbReference type="GO" id="GO:0005737">
    <property type="term" value="C:cytoplasm"/>
    <property type="evidence" value="ECO:0007669"/>
    <property type="project" value="UniProtKB-SubCell"/>
</dbReference>
<dbReference type="GO" id="GO:0005524">
    <property type="term" value="F:ATP binding"/>
    <property type="evidence" value="ECO:0007669"/>
    <property type="project" value="UniProtKB-UniRule"/>
</dbReference>
<dbReference type="GO" id="GO:0004817">
    <property type="term" value="F:cysteine-tRNA ligase activity"/>
    <property type="evidence" value="ECO:0007669"/>
    <property type="project" value="UniProtKB-UniRule"/>
</dbReference>
<dbReference type="GO" id="GO:0008270">
    <property type="term" value="F:zinc ion binding"/>
    <property type="evidence" value="ECO:0007669"/>
    <property type="project" value="UniProtKB-UniRule"/>
</dbReference>
<dbReference type="GO" id="GO:0006423">
    <property type="term" value="P:cysteinyl-tRNA aminoacylation"/>
    <property type="evidence" value="ECO:0007669"/>
    <property type="project" value="UniProtKB-UniRule"/>
</dbReference>
<dbReference type="CDD" id="cd00672">
    <property type="entry name" value="CysRS_core"/>
    <property type="match status" value="1"/>
</dbReference>
<dbReference type="FunFam" id="3.40.50.620:FF:000130">
    <property type="entry name" value="Cysteine--tRNA ligase"/>
    <property type="match status" value="1"/>
</dbReference>
<dbReference type="Gene3D" id="1.20.120.1910">
    <property type="entry name" value="Cysteine-tRNA ligase, C-terminal anti-codon recognition domain"/>
    <property type="match status" value="1"/>
</dbReference>
<dbReference type="Gene3D" id="3.40.50.620">
    <property type="entry name" value="HUPs"/>
    <property type="match status" value="1"/>
</dbReference>
<dbReference type="HAMAP" id="MF_00041">
    <property type="entry name" value="Cys_tRNA_synth"/>
    <property type="match status" value="1"/>
</dbReference>
<dbReference type="InterPro" id="IPR015803">
    <property type="entry name" value="Cys-tRNA-ligase"/>
</dbReference>
<dbReference type="InterPro" id="IPR015273">
    <property type="entry name" value="Cys-tRNA-synt_Ia_DALR"/>
</dbReference>
<dbReference type="InterPro" id="IPR024909">
    <property type="entry name" value="Cys-tRNA/MSH_ligase"/>
</dbReference>
<dbReference type="InterPro" id="IPR014729">
    <property type="entry name" value="Rossmann-like_a/b/a_fold"/>
</dbReference>
<dbReference type="InterPro" id="IPR032678">
    <property type="entry name" value="tRNA-synt_1_cat_dom"/>
</dbReference>
<dbReference type="InterPro" id="IPR009080">
    <property type="entry name" value="tRNAsynth_Ia_anticodon-bd"/>
</dbReference>
<dbReference type="NCBIfam" id="TIGR00435">
    <property type="entry name" value="cysS"/>
    <property type="match status" value="1"/>
</dbReference>
<dbReference type="PANTHER" id="PTHR10890:SF3">
    <property type="entry name" value="CYSTEINE--TRNA LIGASE, CYTOPLASMIC"/>
    <property type="match status" value="1"/>
</dbReference>
<dbReference type="PANTHER" id="PTHR10890">
    <property type="entry name" value="CYSTEINYL-TRNA SYNTHETASE"/>
    <property type="match status" value="1"/>
</dbReference>
<dbReference type="Pfam" id="PF09190">
    <property type="entry name" value="DALR_2"/>
    <property type="match status" value="1"/>
</dbReference>
<dbReference type="Pfam" id="PF01406">
    <property type="entry name" value="tRNA-synt_1e"/>
    <property type="match status" value="1"/>
</dbReference>
<dbReference type="PRINTS" id="PR00983">
    <property type="entry name" value="TRNASYNTHCYS"/>
</dbReference>
<dbReference type="SMART" id="SM00840">
    <property type="entry name" value="DALR_2"/>
    <property type="match status" value="1"/>
</dbReference>
<dbReference type="SUPFAM" id="SSF47323">
    <property type="entry name" value="Anticodon-binding domain of a subclass of class I aminoacyl-tRNA synthetases"/>
    <property type="match status" value="1"/>
</dbReference>
<dbReference type="SUPFAM" id="SSF52374">
    <property type="entry name" value="Nucleotidylyl transferase"/>
    <property type="match status" value="1"/>
</dbReference>
<comment type="catalytic activity">
    <reaction evidence="1">
        <text>tRNA(Cys) + L-cysteine + ATP = L-cysteinyl-tRNA(Cys) + AMP + diphosphate</text>
        <dbReference type="Rhea" id="RHEA:17773"/>
        <dbReference type="Rhea" id="RHEA-COMP:9661"/>
        <dbReference type="Rhea" id="RHEA-COMP:9679"/>
        <dbReference type="ChEBI" id="CHEBI:30616"/>
        <dbReference type="ChEBI" id="CHEBI:33019"/>
        <dbReference type="ChEBI" id="CHEBI:35235"/>
        <dbReference type="ChEBI" id="CHEBI:78442"/>
        <dbReference type="ChEBI" id="CHEBI:78517"/>
        <dbReference type="ChEBI" id="CHEBI:456215"/>
        <dbReference type="EC" id="6.1.1.16"/>
    </reaction>
</comment>
<comment type="cofactor">
    <cofactor evidence="1">
        <name>Zn(2+)</name>
        <dbReference type="ChEBI" id="CHEBI:29105"/>
    </cofactor>
    <text evidence="1">Binds 1 zinc ion per subunit.</text>
</comment>
<comment type="subcellular location">
    <subcellularLocation>
        <location evidence="1">Cytoplasm</location>
    </subcellularLocation>
</comment>
<comment type="similarity">
    <text evidence="1">Belongs to the class-I aminoacyl-tRNA synthetase family.</text>
</comment>
<gene>
    <name evidence="1" type="primary">cysS</name>
    <name type="ordered locus">Pcal_0031</name>
</gene>
<protein>
    <recommendedName>
        <fullName evidence="1">Cysteine--tRNA ligase</fullName>
        <ecNumber evidence="1">6.1.1.16</ecNumber>
    </recommendedName>
    <alternativeName>
        <fullName evidence="1">Cysteinyl-tRNA synthetase</fullName>
        <shortName evidence="1">CysRS</shortName>
    </alternativeName>
</protein>
<organism>
    <name type="scientific">Pyrobaculum calidifontis (strain DSM 21063 / JCM 11548 / VA1)</name>
    <dbReference type="NCBI Taxonomy" id="410359"/>
    <lineage>
        <taxon>Archaea</taxon>
        <taxon>Thermoproteota</taxon>
        <taxon>Thermoprotei</taxon>
        <taxon>Thermoproteales</taxon>
        <taxon>Thermoproteaceae</taxon>
        <taxon>Pyrobaculum</taxon>
    </lineage>
</organism>
<accession>A3MS54</accession>
<sequence length="473" mass="54251">MRIYNTATRQVEEFTTYTPGLARGYVCGITPYDHVHVGHGRVYVFFDMFRRYLESLGYEVRLVVNFTDIDDKIIAKAREEFGPEAYKRWREVPERYIAEFFEVSKRLFIKPAYAYPRVTENVDDMVKWISALVEKGFAYVAPDGSVYFEVGKVPNYGVLSRQRIEELIAGARVEPEPGKRNPLDFALWKSWSPGEPWWNSPWCPGRPGWHLECVVMSTKHLGVPFDFHGGGADLIFPHHENEIAIAKAYFGVDNFAKYWIHVGYLTVRGEKMSKSLGNVITLREVLSKYSGEALRLAYAMSHYRKPMEFSFELLDQAEDIVKTLYTAYDELSQAVADAGDADRERVDIGNFKAAFYSALEDDFSTPEAVQQLYAAAKYIISTVLHKVDKLSKNTVLAILADYVKMADVIGVLERREVAKEVEEAVKALVEVRARLRSERLYQLADYVRERAKALGAELHDFGPRTYYTIRRRG</sequence>
<reference key="1">
    <citation type="submission" date="2007-02" db="EMBL/GenBank/DDBJ databases">
        <title>Complete sequence of Pyrobaculum calidifontis JCM 11548.</title>
        <authorList>
            <consortium name="US DOE Joint Genome Institute"/>
            <person name="Copeland A."/>
            <person name="Lucas S."/>
            <person name="Lapidus A."/>
            <person name="Barry K."/>
            <person name="Glavina del Rio T."/>
            <person name="Dalin E."/>
            <person name="Tice H."/>
            <person name="Pitluck S."/>
            <person name="Chain P."/>
            <person name="Malfatti S."/>
            <person name="Shin M."/>
            <person name="Vergez L."/>
            <person name="Schmutz J."/>
            <person name="Larimer F."/>
            <person name="Land M."/>
            <person name="Hauser L."/>
            <person name="Kyrpides N."/>
            <person name="Mikhailova N."/>
            <person name="Cozen A.E."/>
            <person name="Fitz-Gibbon S.T."/>
            <person name="House C.H."/>
            <person name="Saltikov C."/>
            <person name="Lowe T.M."/>
            <person name="Richardson P."/>
        </authorList>
    </citation>
    <scope>NUCLEOTIDE SEQUENCE [LARGE SCALE GENOMIC DNA]</scope>
    <source>
        <strain>DSM 21063 / JCM 11548 / VA1</strain>
    </source>
</reference>